<name>IF11_THIDA</name>
<sequence length="72" mass="8234">MSKEDVIQMQGEVIENLPNATFRVKLENGHVLLGHISGKMRMHYIRILPGDKVTVELTPYDLTKGRIVFRAK</sequence>
<protein>
    <recommendedName>
        <fullName evidence="1">Translation initiation factor IF-1 1</fullName>
    </recommendedName>
</protein>
<accession>Q3SLM8</accession>
<proteinExistence type="inferred from homology"/>
<keyword id="KW-0963">Cytoplasm</keyword>
<keyword id="KW-0396">Initiation factor</keyword>
<keyword id="KW-0648">Protein biosynthesis</keyword>
<keyword id="KW-1185">Reference proteome</keyword>
<keyword id="KW-0694">RNA-binding</keyword>
<keyword id="KW-0699">rRNA-binding</keyword>
<dbReference type="EMBL" id="CP000116">
    <property type="protein sequence ID" value="AAZ96379.1"/>
    <property type="molecule type" value="Genomic_DNA"/>
</dbReference>
<dbReference type="SMR" id="Q3SLM8"/>
<dbReference type="STRING" id="292415.Tbd_0426"/>
<dbReference type="KEGG" id="tbd:Tbd_0426"/>
<dbReference type="eggNOG" id="COG0361">
    <property type="taxonomic scope" value="Bacteria"/>
</dbReference>
<dbReference type="HOGENOM" id="CLU_151267_1_0_4"/>
<dbReference type="OrthoDB" id="9803250at2"/>
<dbReference type="Proteomes" id="UP000008291">
    <property type="component" value="Chromosome"/>
</dbReference>
<dbReference type="GO" id="GO:0005829">
    <property type="term" value="C:cytosol"/>
    <property type="evidence" value="ECO:0007669"/>
    <property type="project" value="TreeGrafter"/>
</dbReference>
<dbReference type="GO" id="GO:0043022">
    <property type="term" value="F:ribosome binding"/>
    <property type="evidence" value="ECO:0007669"/>
    <property type="project" value="UniProtKB-UniRule"/>
</dbReference>
<dbReference type="GO" id="GO:0019843">
    <property type="term" value="F:rRNA binding"/>
    <property type="evidence" value="ECO:0007669"/>
    <property type="project" value="UniProtKB-UniRule"/>
</dbReference>
<dbReference type="GO" id="GO:0003743">
    <property type="term" value="F:translation initiation factor activity"/>
    <property type="evidence" value="ECO:0007669"/>
    <property type="project" value="UniProtKB-UniRule"/>
</dbReference>
<dbReference type="CDD" id="cd04451">
    <property type="entry name" value="S1_IF1"/>
    <property type="match status" value="1"/>
</dbReference>
<dbReference type="FunFam" id="2.40.50.140:FF:000002">
    <property type="entry name" value="Translation initiation factor IF-1"/>
    <property type="match status" value="1"/>
</dbReference>
<dbReference type="Gene3D" id="2.40.50.140">
    <property type="entry name" value="Nucleic acid-binding proteins"/>
    <property type="match status" value="1"/>
</dbReference>
<dbReference type="HAMAP" id="MF_00075">
    <property type="entry name" value="IF_1"/>
    <property type="match status" value="1"/>
</dbReference>
<dbReference type="InterPro" id="IPR012340">
    <property type="entry name" value="NA-bd_OB-fold"/>
</dbReference>
<dbReference type="InterPro" id="IPR006196">
    <property type="entry name" value="RNA-binding_domain_S1_IF1"/>
</dbReference>
<dbReference type="InterPro" id="IPR003029">
    <property type="entry name" value="S1_domain"/>
</dbReference>
<dbReference type="InterPro" id="IPR004368">
    <property type="entry name" value="TIF_IF1"/>
</dbReference>
<dbReference type="NCBIfam" id="TIGR00008">
    <property type="entry name" value="infA"/>
    <property type="match status" value="1"/>
</dbReference>
<dbReference type="PANTHER" id="PTHR33370">
    <property type="entry name" value="TRANSLATION INITIATION FACTOR IF-1, CHLOROPLASTIC"/>
    <property type="match status" value="1"/>
</dbReference>
<dbReference type="PANTHER" id="PTHR33370:SF1">
    <property type="entry name" value="TRANSLATION INITIATION FACTOR IF-1, CHLOROPLASTIC"/>
    <property type="match status" value="1"/>
</dbReference>
<dbReference type="Pfam" id="PF01176">
    <property type="entry name" value="eIF-1a"/>
    <property type="match status" value="1"/>
</dbReference>
<dbReference type="SMART" id="SM00316">
    <property type="entry name" value="S1"/>
    <property type="match status" value="1"/>
</dbReference>
<dbReference type="SUPFAM" id="SSF50249">
    <property type="entry name" value="Nucleic acid-binding proteins"/>
    <property type="match status" value="1"/>
</dbReference>
<dbReference type="PROSITE" id="PS50832">
    <property type="entry name" value="S1_IF1_TYPE"/>
    <property type="match status" value="1"/>
</dbReference>
<gene>
    <name evidence="1" type="primary">infA1</name>
    <name type="ordered locus">Tbd_0426</name>
</gene>
<comment type="function">
    <text evidence="1">One of the essential components for the initiation of protein synthesis. Stabilizes the binding of IF-2 and IF-3 on the 30S subunit to which N-formylmethionyl-tRNA(fMet) subsequently binds. Helps modulate mRNA selection, yielding the 30S pre-initiation complex (PIC). Upon addition of the 50S ribosomal subunit IF-1, IF-2 and IF-3 are released leaving the mature 70S translation initiation complex.</text>
</comment>
<comment type="subunit">
    <text evidence="1">Component of the 30S ribosomal translation pre-initiation complex which assembles on the 30S ribosome in the order IF-2 and IF-3, IF-1 and N-formylmethionyl-tRNA(fMet); mRNA recruitment can occur at any time during PIC assembly.</text>
</comment>
<comment type="subcellular location">
    <subcellularLocation>
        <location evidence="1">Cytoplasm</location>
    </subcellularLocation>
</comment>
<comment type="similarity">
    <text evidence="1">Belongs to the IF-1 family.</text>
</comment>
<evidence type="ECO:0000255" key="1">
    <source>
        <dbReference type="HAMAP-Rule" id="MF_00075"/>
    </source>
</evidence>
<feature type="chain" id="PRO_0000263892" description="Translation initiation factor IF-1 1">
    <location>
        <begin position="1"/>
        <end position="72"/>
    </location>
</feature>
<feature type="domain" description="S1-like" evidence="1">
    <location>
        <begin position="1"/>
        <end position="72"/>
    </location>
</feature>
<organism>
    <name type="scientific">Thiobacillus denitrificans (strain ATCC 25259 / T1)</name>
    <dbReference type="NCBI Taxonomy" id="292415"/>
    <lineage>
        <taxon>Bacteria</taxon>
        <taxon>Pseudomonadati</taxon>
        <taxon>Pseudomonadota</taxon>
        <taxon>Betaproteobacteria</taxon>
        <taxon>Nitrosomonadales</taxon>
        <taxon>Thiobacillaceae</taxon>
        <taxon>Thiobacillus</taxon>
    </lineage>
</organism>
<reference key="1">
    <citation type="journal article" date="2006" name="J. Bacteriol.">
        <title>The genome sequence of the obligately chemolithoautotrophic, facultatively anaerobic bacterium Thiobacillus denitrificans.</title>
        <authorList>
            <person name="Beller H.R."/>
            <person name="Chain P.S."/>
            <person name="Letain T.E."/>
            <person name="Chakicherla A."/>
            <person name="Larimer F.W."/>
            <person name="Richardson P.M."/>
            <person name="Coleman M.A."/>
            <person name="Wood A.P."/>
            <person name="Kelly D.P."/>
        </authorList>
    </citation>
    <scope>NUCLEOTIDE SEQUENCE [LARGE SCALE GENOMIC DNA]</scope>
    <source>
        <strain>ATCC 25259 / T1</strain>
    </source>
</reference>